<proteinExistence type="inferred from homology"/>
<reference key="1">
    <citation type="journal article" date="2009" name="J. Bacteriol.">
        <title>Complete genome sequence of Haemophilus parasuis SH0165.</title>
        <authorList>
            <person name="Yue M."/>
            <person name="Yang F."/>
            <person name="Yang J."/>
            <person name="Bei W."/>
            <person name="Cai X."/>
            <person name="Chen L."/>
            <person name="Dong J."/>
            <person name="Zhou R."/>
            <person name="Jin M."/>
            <person name="Jin Q."/>
            <person name="Chen H."/>
        </authorList>
    </citation>
    <scope>NUCLEOTIDE SEQUENCE [LARGE SCALE GENOMIC DNA]</scope>
    <source>
        <strain>SH0165</strain>
    </source>
</reference>
<dbReference type="EC" id="2.7.7.23" evidence="1"/>
<dbReference type="EC" id="2.3.1.157" evidence="1"/>
<dbReference type="EMBL" id="CP001321">
    <property type="protein sequence ID" value="ACL31906.1"/>
    <property type="molecule type" value="Genomic_DNA"/>
</dbReference>
<dbReference type="RefSeq" id="WP_012621613.1">
    <property type="nucleotide sequence ID" value="NC_011852.1"/>
</dbReference>
<dbReference type="SMR" id="B8F3K4"/>
<dbReference type="STRING" id="557723.HAPS_0214"/>
<dbReference type="KEGG" id="hap:HAPS_0214"/>
<dbReference type="PATRIC" id="fig|557723.8.peg.222"/>
<dbReference type="HOGENOM" id="CLU_029499_15_2_6"/>
<dbReference type="UniPathway" id="UPA00113">
    <property type="reaction ID" value="UER00532"/>
</dbReference>
<dbReference type="UniPathway" id="UPA00113">
    <property type="reaction ID" value="UER00533"/>
</dbReference>
<dbReference type="UniPathway" id="UPA00973"/>
<dbReference type="Proteomes" id="UP000006743">
    <property type="component" value="Chromosome"/>
</dbReference>
<dbReference type="GO" id="GO:0005737">
    <property type="term" value="C:cytoplasm"/>
    <property type="evidence" value="ECO:0007669"/>
    <property type="project" value="UniProtKB-SubCell"/>
</dbReference>
<dbReference type="GO" id="GO:0016020">
    <property type="term" value="C:membrane"/>
    <property type="evidence" value="ECO:0007669"/>
    <property type="project" value="GOC"/>
</dbReference>
<dbReference type="GO" id="GO:0019134">
    <property type="term" value="F:glucosamine-1-phosphate N-acetyltransferase activity"/>
    <property type="evidence" value="ECO:0007669"/>
    <property type="project" value="UniProtKB-UniRule"/>
</dbReference>
<dbReference type="GO" id="GO:0000287">
    <property type="term" value="F:magnesium ion binding"/>
    <property type="evidence" value="ECO:0007669"/>
    <property type="project" value="UniProtKB-UniRule"/>
</dbReference>
<dbReference type="GO" id="GO:0003977">
    <property type="term" value="F:UDP-N-acetylglucosamine diphosphorylase activity"/>
    <property type="evidence" value="ECO:0007669"/>
    <property type="project" value="UniProtKB-UniRule"/>
</dbReference>
<dbReference type="GO" id="GO:0000902">
    <property type="term" value="P:cell morphogenesis"/>
    <property type="evidence" value="ECO:0007669"/>
    <property type="project" value="UniProtKB-UniRule"/>
</dbReference>
<dbReference type="GO" id="GO:0071555">
    <property type="term" value="P:cell wall organization"/>
    <property type="evidence" value="ECO:0007669"/>
    <property type="project" value="UniProtKB-KW"/>
</dbReference>
<dbReference type="GO" id="GO:0009245">
    <property type="term" value="P:lipid A biosynthetic process"/>
    <property type="evidence" value="ECO:0007669"/>
    <property type="project" value="UniProtKB-UniRule"/>
</dbReference>
<dbReference type="GO" id="GO:0009252">
    <property type="term" value="P:peptidoglycan biosynthetic process"/>
    <property type="evidence" value="ECO:0007669"/>
    <property type="project" value="UniProtKB-UniRule"/>
</dbReference>
<dbReference type="GO" id="GO:0008360">
    <property type="term" value="P:regulation of cell shape"/>
    <property type="evidence" value="ECO:0007669"/>
    <property type="project" value="UniProtKB-KW"/>
</dbReference>
<dbReference type="GO" id="GO:0006048">
    <property type="term" value="P:UDP-N-acetylglucosamine biosynthetic process"/>
    <property type="evidence" value="ECO:0007669"/>
    <property type="project" value="UniProtKB-UniPathway"/>
</dbReference>
<dbReference type="CDD" id="cd02540">
    <property type="entry name" value="GT2_GlmU_N_bac"/>
    <property type="match status" value="1"/>
</dbReference>
<dbReference type="CDD" id="cd03353">
    <property type="entry name" value="LbH_GlmU_C"/>
    <property type="match status" value="1"/>
</dbReference>
<dbReference type="FunFam" id="3.90.550.10:FF:000006">
    <property type="entry name" value="Bifunctional protein GlmU"/>
    <property type="match status" value="1"/>
</dbReference>
<dbReference type="Gene3D" id="2.160.10.10">
    <property type="entry name" value="Hexapeptide repeat proteins"/>
    <property type="match status" value="1"/>
</dbReference>
<dbReference type="Gene3D" id="3.90.550.10">
    <property type="entry name" value="Spore Coat Polysaccharide Biosynthesis Protein SpsA, Chain A"/>
    <property type="match status" value="1"/>
</dbReference>
<dbReference type="HAMAP" id="MF_01631">
    <property type="entry name" value="GlmU"/>
    <property type="match status" value="1"/>
</dbReference>
<dbReference type="InterPro" id="IPR005882">
    <property type="entry name" value="Bifunctional_GlmU"/>
</dbReference>
<dbReference type="InterPro" id="IPR050065">
    <property type="entry name" value="GlmU-like"/>
</dbReference>
<dbReference type="InterPro" id="IPR038009">
    <property type="entry name" value="GlmU_C_LbH"/>
</dbReference>
<dbReference type="InterPro" id="IPR001451">
    <property type="entry name" value="Hexapep"/>
</dbReference>
<dbReference type="InterPro" id="IPR018357">
    <property type="entry name" value="Hexapep_transf_CS"/>
</dbReference>
<dbReference type="InterPro" id="IPR025877">
    <property type="entry name" value="MobA-like_NTP_Trfase"/>
</dbReference>
<dbReference type="InterPro" id="IPR029044">
    <property type="entry name" value="Nucleotide-diphossugar_trans"/>
</dbReference>
<dbReference type="InterPro" id="IPR011004">
    <property type="entry name" value="Trimer_LpxA-like_sf"/>
</dbReference>
<dbReference type="NCBIfam" id="TIGR01173">
    <property type="entry name" value="glmU"/>
    <property type="match status" value="1"/>
</dbReference>
<dbReference type="NCBIfam" id="NF006986">
    <property type="entry name" value="PRK09451.1"/>
    <property type="match status" value="1"/>
</dbReference>
<dbReference type="PANTHER" id="PTHR43584:SF3">
    <property type="entry name" value="BIFUNCTIONAL PROTEIN GLMU"/>
    <property type="match status" value="1"/>
</dbReference>
<dbReference type="PANTHER" id="PTHR43584">
    <property type="entry name" value="NUCLEOTIDYL TRANSFERASE"/>
    <property type="match status" value="1"/>
</dbReference>
<dbReference type="Pfam" id="PF00132">
    <property type="entry name" value="Hexapep"/>
    <property type="match status" value="2"/>
</dbReference>
<dbReference type="Pfam" id="PF12804">
    <property type="entry name" value="NTP_transf_3"/>
    <property type="match status" value="1"/>
</dbReference>
<dbReference type="SUPFAM" id="SSF53448">
    <property type="entry name" value="Nucleotide-diphospho-sugar transferases"/>
    <property type="match status" value="1"/>
</dbReference>
<dbReference type="SUPFAM" id="SSF51161">
    <property type="entry name" value="Trimeric LpxA-like enzymes"/>
    <property type="match status" value="1"/>
</dbReference>
<dbReference type="PROSITE" id="PS00101">
    <property type="entry name" value="HEXAPEP_TRANSFERASES"/>
    <property type="match status" value="2"/>
</dbReference>
<name>GLMU_GLAP5</name>
<comment type="function">
    <text evidence="1">Catalyzes the last two sequential reactions in the de novo biosynthetic pathway for UDP-N-acetylglucosamine (UDP-GlcNAc). The C-terminal domain catalyzes the transfer of acetyl group from acetyl coenzyme A to glucosamine-1-phosphate (GlcN-1-P) to produce N-acetylglucosamine-1-phosphate (GlcNAc-1-P), which is converted into UDP-GlcNAc by the transfer of uridine 5-monophosphate (from uridine 5-triphosphate), a reaction catalyzed by the N-terminal domain.</text>
</comment>
<comment type="catalytic activity">
    <reaction evidence="1">
        <text>alpha-D-glucosamine 1-phosphate + acetyl-CoA = N-acetyl-alpha-D-glucosamine 1-phosphate + CoA + H(+)</text>
        <dbReference type="Rhea" id="RHEA:13725"/>
        <dbReference type="ChEBI" id="CHEBI:15378"/>
        <dbReference type="ChEBI" id="CHEBI:57287"/>
        <dbReference type="ChEBI" id="CHEBI:57288"/>
        <dbReference type="ChEBI" id="CHEBI:57776"/>
        <dbReference type="ChEBI" id="CHEBI:58516"/>
        <dbReference type="EC" id="2.3.1.157"/>
    </reaction>
</comment>
<comment type="catalytic activity">
    <reaction evidence="1">
        <text>N-acetyl-alpha-D-glucosamine 1-phosphate + UTP + H(+) = UDP-N-acetyl-alpha-D-glucosamine + diphosphate</text>
        <dbReference type="Rhea" id="RHEA:13509"/>
        <dbReference type="ChEBI" id="CHEBI:15378"/>
        <dbReference type="ChEBI" id="CHEBI:33019"/>
        <dbReference type="ChEBI" id="CHEBI:46398"/>
        <dbReference type="ChEBI" id="CHEBI:57705"/>
        <dbReference type="ChEBI" id="CHEBI:57776"/>
        <dbReference type="EC" id="2.7.7.23"/>
    </reaction>
</comment>
<comment type="cofactor">
    <cofactor evidence="1">
        <name>Mg(2+)</name>
        <dbReference type="ChEBI" id="CHEBI:18420"/>
    </cofactor>
    <text evidence="1">Binds 1 Mg(2+) ion per subunit.</text>
</comment>
<comment type="pathway">
    <text evidence="1">Nucleotide-sugar biosynthesis; UDP-N-acetyl-alpha-D-glucosamine biosynthesis; N-acetyl-alpha-D-glucosamine 1-phosphate from alpha-D-glucosamine 6-phosphate (route II): step 2/2.</text>
</comment>
<comment type="pathway">
    <text evidence="1">Nucleotide-sugar biosynthesis; UDP-N-acetyl-alpha-D-glucosamine biosynthesis; UDP-N-acetyl-alpha-D-glucosamine from N-acetyl-alpha-D-glucosamine 1-phosphate: step 1/1.</text>
</comment>
<comment type="pathway">
    <text evidence="1">Bacterial outer membrane biogenesis; LPS lipid A biosynthesis.</text>
</comment>
<comment type="subunit">
    <text evidence="1">Homotrimer.</text>
</comment>
<comment type="subcellular location">
    <subcellularLocation>
        <location evidence="1">Cytoplasm</location>
    </subcellularLocation>
</comment>
<comment type="similarity">
    <text evidence="1">In the N-terminal section; belongs to the N-acetylglucosamine-1-phosphate uridyltransferase family.</text>
</comment>
<comment type="similarity">
    <text evidence="1">In the C-terminal section; belongs to the transferase hexapeptide repeat family.</text>
</comment>
<protein>
    <recommendedName>
        <fullName evidence="1">Bifunctional protein GlmU</fullName>
    </recommendedName>
    <domain>
        <recommendedName>
            <fullName evidence="1">UDP-N-acetylglucosamine pyrophosphorylase</fullName>
            <ecNumber evidence="1">2.7.7.23</ecNumber>
        </recommendedName>
        <alternativeName>
            <fullName evidence="1">N-acetylglucosamine-1-phosphate uridyltransferase</fullName>
        </alternativeName>
    </domain>
    <domain>
        <recommendedName>
            <fullName evidence="1">Glucosamine-1-phosphate N-acetyltransferase</fullName>
            <ecNumber evidence="1">2.3.1.157</ecNumber>
        </recommendedName>
    </domain>
</protein>
<evidence type="ECO:0000255" key="1">
    <source>
        <dbReference type="HAMAP-Rule" id="MF_01631"/>
    </source>
</evidence>
<feature type="chain" id="PRO_1000186458" description="Bifunctional protein GlmU">
    <location>
        <begin position="1"/>
        <end position="453"/>
    </location>
</feature>
<feature type="region of interest" description="Pyrophosphorylase" evidence="1">
    <location>
        <begin position="1"/>
        <end position="227"/>
    </location>
</feature>
<feature type="region of interest" description="Linker" evidence="1">
    <location>
        <begin position="228"/>
        <end position="248"/>
    </location>
</feature>
<feature type="region of interest" description="N-acetyltransferase" evidence="1">
    <location>
        <begin position="249"/>
        <end position="453"/>
    </location>
</feature>
<feature type="active site" description="Proton acceptor" evidence="1">
    <location>
        <position position="361"/>
    </location>
</feature>
<feature type="binding site" evidence="1">
    <location>
        <begin position="9"/>
        <end position="12"/>
    </location>
    <ligand>
        <name>UDP-N-acetyl-alpha-D-glucosamine</name>
        <dbReference type="ChEBI" id="CHEBI:57705"/>
    </ligand>
</feature>
<feature type="binding site" evidence="1">
    <location>
        <position position="23"/>
    </location>
    <ligand>
        <name>UDP-N-acetyl-alpha-D-glucosamine</name>
        <dbReference type="ChEBI" id="CHEBI:57705"/>
    </ligand>
</feature>
<feature type="binding site" evidence="1">
    <location>
        <position position="74"/>
    </location>
    <ligand>
        <name>UDP-N-acetyl-alpha-D-glucosamine</name>
        <dbReference type="ChEBI" id="CHEBI:57705"/>
    </ligand>
</feature>
<feature type="binding site" evidence="1">
    <location>
        <begin position="79"/>
        <end position="80"/>
    </location>
    <ligand>
        <name>UDP-N-acetyl-alpha-D-glucosamine</name>
        <dbReference type="ChEBI" id="CHEBI:57705"/>
    </ligand>
</feature>
<feature type="binding site" evidence="1">
    <location>
        <begin position="101"/>
        <end position="103"/>
    </location>
    <ligand>
        <name>UDP-N-acetyl-alpha-D-glucosamine</name>
        <dbReference type="ChEBI" id="CHEBI:57705"/>
    </ligand>
</feature>
<feature type="binding site" evidence="1">
    <location>
        <position position="103"/>
    </location>
    <ligand>
        <name>Mg(2+)</name>
        <dbReference type="ChEBI" id="CHEBI:18420"/>
    </ligand>
</feature>
<feature type="binding site" evidence="1">
    <location>
        <position position="138"/>
    </location>
    <ligand>
        <name>UDP-N-acetyl-alpha-D-glucosamine</name>
        <dbReference type="ChEBI" id="CHEBI:57705"/>
    </ligand>
</feature>
<feature type="binding site" evidence="1">
    <location>
        <position position="152"/>
    </location>
    <ligand>
        <name>UDP-N-acetyl-alpha-D-glucosamine</name>
        <dbReference type="ChEBI" id="CHEBI:57705"/>
    </ligand>
</feature>
<feature type="binding site" evidence="1">
    <location>
        <position position="167"/>
    </location>
    <ligand>
        <name>UDP-N-acetyl-alpha-D-glucosamine</name>
        <dbReference type="ChEBI" id="CHEBI:57705"/>
    </ligand>
</feature>
<feature type="binding site" evidence="1">
    <location>
        <position position="225"/>
    </location>
    <ligand>
        <name>Mg(2+)</name>
        <dbReference type="ChEBI" id="CHEBI:18420"/>
    </ligand>
</feature>
<feature type="binding site" evidence="1">
    <location>
        <position position="225"/>
    </location>
    <ligand>
        <name>UDP-N-acetyl-alpha-D-glucosamine</name>
        <dbReference type="ChEBI" id="CHEBI:57705"/>
    </ligand>
</feature>
<feature type="binding site" evidence="1">
    <location>
        <position position="331"/>
    </location>
    <ligand>
        <name>UDP-N-acetyl-alpha-D-glucosamine</name>
        <dbReference type="ChEBI" id="CHEBI:57705"/>
    </ligand>
</feature>
<feature type="binding site" evidence="1">
    <location>
        <position position="349"/>
    </location>
    <ligand>
        <name>UDP-N-acetyl-alpha-D-glucosamine</name>
        <dbReference type="ChEBI" id="CHEBI:57705"/>
    </ligand>
</feature>
<feature type="binding site" evidence="1">
    <location>
        <position position="364"/>
    </location>
    <ligand>
        <name>UDP-N-acetyl-alpha-D-glucosamine</name>
        <dbReference type="ChEBI" id="CHEBI:57705"/>
    </ligand>
</feature>
<feature type="binding site" evidence="1">
    <location>
        <position position="375"/>
    </location>
    <ligand>
        <name>UDP-N-acetyl-alpha-D-glucosamine</name>
        <dbReference type="ChEBI" id="CHEBI:57705"/>
    </ligand>
</feature>
<feature type="binding site" evidence="1">
    <location>
        <position position="378"/>
    </location>
    <ligand>
        <name>acetyl-CoA</name>
        <dbReference type="ChEBI" id="CHEBI:57288"/>
    </ligand>
</feature>
<feature type="binding site" evidence="1">
    <location>
        <begin position="384"/>
        <end position="385"/>
    </location>
    <ligand>
        <name>acetyl-CoA</name>
        <dbReference type="ChEBI" id="CHEBI:57288"/>
    </ligand>
</feature>
<feature type="binding site" evidence="1">
    <location>
        <position position="403"/>
    </location>
    <ligand>
        <name>acetyl-CoA</name>
        <dbReference type="ChEBI" id="CHEBI:57288"/>
    </ligand>
</feature>
<feature type="binding site" evidence="1">
    <location>
        <position position="421"/>
    </location>
    <ligand>
        <name>acetyl-CoA</name>
        <dbReference type="ChEBI" id="CHEBI:57288"/>
    </ligand>
</feature>
<feature type="binding site" evidence="1">
    <location>
        <position position="438"/>
    </location>
    <ligand>
        <name>acetyl-CoA</name>
        <dbReference type="ChEBI" id="CHEBI:57288"/>
    </ligand>
</feature>
<keyword id="KW-0012">Acyltransferase</keyword>
<keyword id="KW-0133">Cell shape</keyword>
<keyword id="KW-0961">Cell wall biogenesis/degradation</keyword>
<keyword id="KW-0963">Cytoplasm</keyword>
<keyword id="KW-0460">Magnesium</keyword>
<keyword id="KW-0479">Metal-binding</keyword>
<keyword id="KW-0511">Multifunctional enzyme</keyword>
<keyword id="KW-0548">Nucleotidyltransferase</keyword>
<keyword id="KW-0573">Peptidoglycan synthesis</keyword>
<keyword id="KW-1185">Reference proteome</keyword>
<keyword id="KW-0677">Repeat</keyword>
<keyword id="KW-0808">Transferase</keyword>
<gene>
    <name evidence="1" type="primary">glmU</name>
    <name type="ordered locus">HAPS_0214</name>
</gene>
<organism>
    <name type="scientific">Glaesserella parasuis serovar 5 (strain SH0165)</name>
    <name type="common">Haemophilus parasuis</name>
    <dbReference type="NCBI Taxonomy" id="557723"/>
    <lineage>
        <taxon>Bacteria</taxon>
        <taxon>Pseudomonadati</taxon>
        <taxon>Pseudomonadota</taxon>
        <taxon>Gammaproteobacteria</taxon>
        <taxon>Pasteurellales</taxon>
        <taxon>Pasteurellaceae</taxon>
        <taxon>Glaesserella</taxon>
    </lineage>
</organism>
<sequence length="453" mass="48429">MTQLSVVILAAGKGTRMYSDLPKVLHPIAGKPMVKHVIDTAKQLSAKQIHLIYGHGGDLLQQRLSAEPVNWVLQAEQLGTGHAMQQAAPFFADDENILMLYGDAPLITATTLEKLIAAKPENGIALLTVVLDNPTGYGRIIRENGSVVAIVEQKDANPEQLKIQEINTGVMVASGASFKKWLSQLDNNNAQGEYYITDVIAMANRDGYKVEAVQATNLMEVEGANNRLQLAALERYYQKIQAEKLLLAGVTIIDPARFDLRGTVTHGKDVVIDVNVILEGSIQLGNNVKIGAGSVLKNVVLGDNVEIKPYSVLEDSVIGESADVGPFARLRPGTELAAKAHVGNFVEIKKSTIGEGSKVGHLTYIGDSEIGANVNIGAGTITCNYDGANKFKTIIGDNVFVGSDTQLVAPVTVASGATIGAGSTITKDVAADELVITRVPQRHIQGWQRPTKK</sequence>
<accession>B8F3K4</accession>